<reference key="1">
    <citation type="journal article" date="1998" name="Nature">
        <title>Analysis of 1.9 Mb of contiguous sequence from chromosome 4 of Arabidopsis thaliana.</title>
        <authorList>
            <person name="Bevan M."/>
            <person name="Bancroft I."/>
            <person name="Bent E."/>
            <person name="Love K."/>
            <person name="Goodman H.M."/>
            <person name="Dean C."/>
            <person name="Bergkamp R."/>
            <person name="Dirkse W."/>
            <person name="van Staveren M."/>
            <person name="Stiekema W."/>
            <person name="Drost L."/>
            <person name="Ridley P."/>
            <person name="Hudson S.-A."/>
            <person name="Patel K."/>
            <person name="Murphy G."/>
            <person name="Piffanelli P."/>
            <person name="Wedler H."/>
            <person name="Wedler E."/>
            <person name="Wambutt R."/>
            <person name="Weitzenegger T."/>
            <person name="Pohl T."/>
            <person name="Terryn N."/>
            <person name="Gielen J."/>
            <person name="Villarroel R."/>
            <person name="De Clercq R."/>
            <person name="van Montagu M."/>
            <person name="Lecharny A."/>
            <person name="Aubourg S."/>
            <person name="Gy I."/>
            <person name="Kreis M."/>
            <person name="Lao N."/>
            <person name="Kavanagh T."/>
            <person name="Hempel S."/>
            <person name="Kotter P."/>
            <person name="Entian K.-D."/>
            <person name="Rieger M."/>
            <person name="Schaefer M."/>
            <person name="Funk B."/>
            <person name="Mueller-Auer S."/>
            <person name="Silvey M."/>
            <person name="James R."/>
            <person name="Monfort A."/>
            <person name="Pons A."/>
            <person name="Puigdomenech P."/>
            <person name="Douka A."/>
            <person name="Voukelatou E."/>
            <person name="Milioni D."/>
            <person name="Hatzopoulos P."/>
            <person name="Piravandi E."/>
            <person name="Obermaier B."/>
            <person name="Hilbert H."/>
            <person name="Duesterhoeft A."/>
            <person name="Moores T."/>
            <person name="Jones J.D.G."/>
            <person name="Eneva T."/>
            <person name="Palme K."/>
            <person name="Benes V."/>
            <person name="Rechmann S."/>
            <person name="Ansorge W."/>
            <person name="Cooke R."/>
            <person name="Berger C."/>
            <person name="Delseny M."/>
            <person name="Voet M."/>
            <person name="Volckaert G."/>
            <person name="Mewes H.-W."/>
            <person name="Klosterman S."/>
            <person name="Schueller C."/>
            <person name="Chalwatzis N."/>
        </authorList>
    </citation>
    <scope>NUCLEOTIDE SEQUENCE [LARGE SCALE GENOMIC DNA]</scope>
    <source>
        <strain>cv. Columbia</strain>
    </source>
</reference>
<reference key="2">
    <citation type="journal article" date="1999" name="Nature">
        <title>Sequence and analysis of chromosome 4 of the plant Arabidopsis thaliana.</title>
        <authorList>
            <person name="Mayer K.F.X."/>
            <person name="Schueller C."/>
            <person name="Wambutt R."/>
            <person name="Murphy G."/>
            <person name="Volckaert G."/>
            <person name="Pohl T."/>
            <person name="Duesterhoeft A."/>
            <person name="Stiekema W."/>
            <person name="Entian K.-D."/>
            <person name="Terryn N."/>
            <person name="Harris B."/>
            <person name="Ansorge W."/>
            <person name="Brandt P."/>
            <person name="Grivell L.A."/>
            <person name="Rieger M."/>
            <person name="Weichselgartner M."/>
            <person name="de Simone V."/>
            <person name="Obermaier B."/>
            <person name="Mache R."/>
            <person name="Mueller M."/>
            <person name="Kreis M."/>
            <person name="Delseny M."/>
            <person name="Puigdomenech P."/>
            <person name="Watson M."/>
            <person name="Schmidtheini T."/>
            <person name="Reichert B."/>
            <person name="Portetelle D."/>
            <person name="Perez-Alonso M."/>
            <person name="Boutry M."/>
            <person name="Bancroft I."/>
            <person name="Vos P."/>
            <person name="Hoheisel J."/>
            <person name="Zimmermann W."/>
            <person name="Wedler H."/>
            <person name="Ridley P."/>
            <person name="Langham S.-A."/>
            <person name="McCullagh B."/>
            <person name="Bilham L."/>
            <person name="Robben J."/>
            <person name="van der Schueren J."/>
            <person name="Grymonprez B."/>
            <person name="Chuang Y.-J."/>
            <person name="Vandenbussche F."/>
            <person name="Braeken M."/>
            <person name="Weltjens I."/>
            <person name="Voet M."/>
            <person name="Bastiaens I."/>
            <person name="Aert R."/>
            <person name="Defoor E."/>
            <person name="Weitzenegger T."/>
            <person name="Bothe G."/>
            <person name="Ramsperger U."/>
            <person name="Hilbert H."/>
            <person name="Braun M."/>
            <person name="Holzer E."/>
            <person name="Brandt A."/>
            <person name="Peters S."/>
            <person name="van Staveren M."/>
            <person name="Dirkse W."/>
            <person name="Mooijman P."/>
            <person name="Klein Lankhorst R."/>
            <person name="Rose M."/>
            <person name="Hauf J."/>
            <person name="Koetter P."/>
            <person name="Berneiser S."/>
            <person name="Hempel S."/>
            <person name="Feldpausch M."/>
            <person name="Lamberth S."/>
            <person name="Van den Daele H."/>
            <person name="De Keyser A."/>
            <person name="Buysshaert C."/>
            <person name="Gielen J."/>
            <person name="Villarroel R."/>
            <person name="De Clercq R."/>
            <person name="van Montagu M."/>
            <person name="Rogers J."/>
            <person name="Cronin A."/>
            <person name="Quail M.A."/>
            <person name="Bray-Allen S."/>
            <person name="Clark L."/>
            <person name="Doggett J."/>
            <person name="Hall S."/>
            <person name="Kay M."/>
            <person name="Lennard N."/>
            <person name="McLay K."/>
            <person name="Mayes R."/>
            <person name="Pettett A."/>
            <person name="Rajandream M.A."/>
            <person name="Lyne M."/>
            <person name="Benes V."/>
            <person name="Rechmann S."/>
            <person name="Borkova D."/>
            <person name="Bloecker H."/>
            <person name="Scharfe M."/>
            <person name="Grimm M."/>
            <person name="Loehnert T.-H."/>
            <person name="Dose S."/>
            <person name="de Haan M."/>
            <person name="Maarse A.C."/>
            <person name="Schaefer M."/>
            <person name="Mueller-Auer S."/>
            <person name="Gabel C."/>
            <person name="Fuchs M."/>
            <person name="Fartmann B."/>
            <person name="Granderath K."/>
            <person name="Dauner D."/>
            <person name="Herzl A."/>
            <person name="Neumann S."/>
            <person name="Argiriou A."/>
            <person name="Vitale D."/>
            <person name="Liguori R."/>
            <person name="Piravandi E."/>
            <person name="Massenet O."/>
            <person name="Quigley F."/>
            <person name="Clabauld G."/>
            <person name="Muendlein A."/>
            <person name="Felber R."/>
            <person name="Schnabl S."/>
            <person name="Hiller R."/>
            <person name="Schmidt W."/>
            <person name="Lecharny A."/>
            <person name="Aubourg S."/>
            <person name="Chefdor F."/>
            <person name="Cooke R."/>
            <person name="Berger C."/>
            <person name="Monfort A."/>
            <person name="Casacuberta E."/>
            <person name="Gibbons T."/>
            <person name="Weber N."/>
            <person name="Vandenbol M."/>
            <person name="Bargues M."/>
            <person name="Terol J."/>
            <person name="Torres A."/>
            <person name="Perez-Perez A."/>
            <person name="Purnelle B."/>
            <person name="Bent E."/>
            <person name="Johnson S."/>
            <person name="Tacon D."/>
            <person name="Jesse T."/>
            <person name="Heijnen L."/>
            <person name="Schwarz S."/>
            <person name="Scholler P."/>
            <person name="Heber S."/>
            <person name="Francs P."/>
            <person name="Bielke C."/>
            <person name="Frishman D."/>
            <person name="Haase D."/>
            <person name="Lemcke K."/>
            <person name="Mewes H.-W."/>
            <person name="Stocker S."/>
            <person name="Zaccaria P."/>
            <person name="Bevan M."/>
            <person name="Wilson R.K."/>
            <person name="de la Bastide M."/>
            <person name="Habermann K."/>
            <person name="Parnell L."/>
            <person name="Dedhia N."/>
            <person name="Gnoj L."/>
            <person name="Schutz K."/>
            <person name="Huang E."/>
            <person name="Spiegel L."/>
            <person name="Sekhon M."/>
            <person name="Murray J."/>
            <person name="Sheet P."/>
            <person name="Cordes M."/>
            <person name="Abu-Threideh J."/>
            <person name="Stoneking T."/>
            <person name="Kalicki J."/>
            <person name="Graves T."/>
            <person name="Harmon G."/>
            <person name="Edwards J."/>
            <person name="Latreille P."/>
            <person name="Courtney L."/>
            <person name="Cloud J."/>
            <person name="Abbott A."/>
            <person name="Scott K."/>
            <person name="Johnson D."/>
            <person name="Minx P."/>
            <person name="Bentley D."/>
            <person name="Fulton B."/>
            <person name="Miller N."/>
            <person name="Greco T."/>
            <person name="Kemp K."/>
            <person name="Kramer J."/>
            <person name="Fulton L."/>
            <person name="Mardis E."/>
            <person name="Dante M."/>
            <person name="Pepin K."/>
            <person name="Hillier L.W."/>
            <person name="Nelson J."/>
            <person name="Spieth J."/>
            <person name="Ryan E."/>
            <person name="Andrews S."/>
            <person name="Geisel C."/>
            <person name="Layman D."/>
            <person name="Du H."/>
            <person name="Ali J."/>
            <person name="Berghoff A."/>
            <person name="Jones K."/>
            <person name="Drone K."/>
            <person name="Cotton M."/>
            <person name="Joshu C."/>
            <person name="Antonoiu B."/>
            <person name="Zidanic M."/>
            <person name="Strong C."/>
            <person name="Sun H."/>
            <person name="Lamar B."/>
            <person name="Yordan C."/>
            <person name="Ma P."/>
            <person name="Zhong J."/>
            <person name="Preston R."/>
            <person name="Vil D."/>
            <person name="Shekher M."/>
            <person name="Matero A."/>
            <person name="Shah R."/>
            <person name="Swaby I.K."/>
            <person name="O'Shaughnessy A."/>
            <person name="Rodriguez M."/>
            <person name="Hoffman J."/>
            <person name="Till S."/>
            <person name="Granat S."/>
            <person name="Shohdy N."/>
            <person name="Hasegawa A."/>
            <person name="Hameed A."/>
            <person name="Lodhi M."/>
            <person name="Johnson A."/>
            <person name="Chen E."/>
            <person name="Marra M.A."/>
            <person name="Martienssen R."/>
            <person name="McCombie W.R."/>
        </authorList>
    </citation>
    <scope>NUCLEOTIDE SEQUENCE [LARGE SCALE GENOMIC DNA]</scope>
    <source>
        <strain>cv. Columbia</strain>
    </source>
</reference>
<reference key="3">
    <citation type="journal article" date="2017" name="Plant J.">
        <title>Araport11: a complete reannotation of the Arabidopsis thaliana reference genome.</title>
        <authorList>
            <person name="Cheng C.Y."/>
            <person name="Krishnakumar V."/>
            <person name="Chan A.P."/>
            <person name="Thibaud-Nissen F."/>
            <person name="Schobel S."/>
            <person name="Town C.D."/>
        </authorList>
    </citation>
    <scope>GENOME REANNOTATION</scope>
    <source>
        <strain>cv. Columbia</strain>
    </source>
</reference>
<reference key="4">
    <citation type="journal article" date="2002" name="Science">
        <title>Functional annotation of a full-length Arabidopsis cDNA collection.</title>
        <authorList>
            <person name="Seki M."/>
            <person name="Narusaka M."/>
            <person name="Kamiya A."/>
            <person name="Ishida J."/>
            <person name="Satou M."/>
            <person name="Sakurai T."/>
            <person name="Nakajima M."/>
            <person name="Enju A."/>
            <person name="Akiyama K."/>
            <person name="Oono Y."/>
            <person name="Muramatsu M."/>
            <person name="Hayashizaki Y."/>
            <person name="Kawai J."/>
            <person name="Carninci P."/>
            <person name="Itoh M."/>
            <person name="Ishii Y."/>
            <person name="Arakawa T."/>
            <person name="Shibata K."/>
            <person name="Shinagawa A."/>
            <person name="Shinozaki K."/>
        </authorList>
    </citation>
    <scope>NUCLEOTIDE SEQUENCE [LARGE SCALE MRNA]</scope>
    <source>
        <strain>cv. Columbia</strain>
    </source>
</reference>
<reference key="5">
    <citation type="journal article" date="2004" name="Plant Mol. Biol.">
        <title>Genome-wide analysis of the GRAS gene family in rice and Arabidopsis.</title>
        <authorList>
            <person name="Tian C."/>
            <person name="Wan P."/>
            <person name="Sun S."/>
            <person name="Li J."/>
            <person name="Chen M."/>
        </authorList>
    </citation>
    <scope>GENE FAMILY</scope>
</reference>
<reference key="6">
    <citation type="journal article" date="2008" name="Plant Mol. Biol.">
        <title>Large-scale analysis of the GRAS gene family in Arabidopsis thaliana.</title>
        <authorList>
            <person name="Lee M.-H."/>
            <person name="Kim B."/>
            <person name="Song S.-K."/>
            <person name="Heo J.-O."/>
            <person name="Yu N.-I."/>
            <person name="Lee S.A."/>
            <person name="Kim M."/>
            <person name="Kim D.G."/>
            <person name="Sohn S.O."/>
            <person name="Lim C.E."/>
            <person name="Chang K.S."/>
            <person name="Lee M.M."/>
            <person name="Lim J."/>
        </authorList>
    </citation>
    <scope>GENE FAMILY</scope>
    <scope>SUBCELLULAR LOCATION</scope>
    <scope>TISSUE SPECIFICITY</scope>
</reference>
<name>SCL15_ARATH</name>
<proteinExistence type="evidence at protein level"/>
<dbReference type="EMBL" id="Z99708">
    <property type="protein sequence ID" value="CAB16826.1"/>
    <property type="molecule type" value="Genomic_DNA"/>
</dbReference>
<dbReference type="EMBL" id="AL161589">
    <property type="protein sequence ID" value="CAB80337.1"/>
    <property type="molecule type" value="Genomic_DNA"/>
</dbReference>
<dbReference type="EMBL" id="CP002687">
    <property type="protein sequence ID" value="AEE86692.1"/>
    <property type="molecule type" value="Genomic_DNA"/>
</dbReference>
<dbReference type="EMBL" id="AK118497">
    <property type="protein sequence ID" value="BAC43101.1"/>
    <property type="molecule type" value="mRNA"/>
</dbReference>
<dbReference type="PIR" id="E85433">
    <property type="entry name" value="E85433"/>
</dbReference>
<dbReference type="SMR" id="O23210"/>
<dbReference type="BioGRID" id="15105">
    <property type="interactions" value="22"/>
</dbReference>
<dbReference type="FunCoup" id="O23210">
    <property type="interactions" value="247"/>
</dbReference>
<dbReference type="IntAct" id="O23210">
    <property type="interactions" value="14"/>
</dbReference>
<dbReference type="STRING" id="3702.O23210"/>
<dbReference type="PaxDb" id="3702-AT4G36710.1"/>
<dbReference type="ProteomicsDB" id="226599"/>
<dbReference type="DNASU" id="829824"/>
<dbReference type="EnsemblPlants" id="AT4G36710.1">
    <property type="protein sequence ID" value="AT4G36710.1"/>
    <property type="gene ID" value="AT4G36710"/>
</dbReference>
<dbReference type="Gramene" id="AT4G36710.1">
    <property type="protein sequence ID" value="AT4G36710.1"/>
    <property type="gene ID" value="AT4G36710"/>
</dbReference>
<dbReference type="KEGG" id="ath:AT4G36710"/>
<dbReference type="Araport" id="AT4G36710"/>
<dbReference type="TAIR" id="AT4G36710">
    <property type="gene designation" value="HAM4"/>
</dbReference>
<dbReference type="eggNOG" id="ENOG502QVNG">
    <property type="taxonomic scope" value="Eukaryota"/>
</dbReference>
<dbReference type="HOGENOM" id="CLU_013139_1_0_1"/>
<dbReference type="InParanoid" id="O23210"/>
<dbReference type="OMA" id="LVLCWHD"/>
<dbReference type="PRO" id="PR:O23210"/>
<dbReference type="Proteomes" id="UP000006548">
    <property type="component" value="Chromosome 4"/>
</dbReference>
<dbReference type="ExpressionAtlas" id="O23210">
    <property type="expression patterns" value="baseline and differential"/>
</dbReference>
<dbReference type="GO" id="GO:0005634">
    <property type="term" value="C:nucleus"/>
    <property type="evidence" value="ECO:0007669"/>
    <property type="project" value="UniProtKB-SubCell"/>
</dbReference>
<dbReference type="GO" id="GO:0003700">
    <property type="term" value="F:DNA-binding transcription factor activity"/>
    <property type="evidence" value="ECO:0000250"/>
    <property type="project" value="TAIR"/>
</dbReference>
<dbReference type="GO" id="GO:0030154">
    <property type="term" value="P:cell differentiation"/>
    <property type="evidence" value="ECO:0000315"/>
    <property type="project" value="TAIR"/>
</dbReference>
<dbReference type="GO" id="GO:0006355">
    <property type="term" value="P:regulation of DNA-templated transcription"/>
    <property type="evidence" value="ECO:0000304"/>
    <property type="project" value="TAIR"/>
</dbReference>
<dbReference type="InterPro" id="IPR005202">
    <property type="entry name" value="TF_GRAS"/>
</dbReference>
<dbReference type="PANTHER" id="PTHR31636">
    <property type="entry name" value="OSJNBA0084A10.13 PROTEIN-RELATED"/>
    <property type="match status" value="1"/>
</dbReference>
<dbReference type="Pfam" id="PF03514">
    <property type="entry name" value="GRAS"/>
    <property type="match status" value="1"/>
</dbReference>
<dbReference type="PROSITE" id="PS50985">
    <property type="entry name" value="GRAS"/>
    <property type="match status" value="1"/>
</dbReference>
<gene>
    <name type="primary">SCL15</name>
    <name type="ordered locus">At4g36710</name>
    <name type="ORF">C7A10.650</name>
</gene>
<accession>O23210</accession>
<accession>Q8GX15</accession>
<organism>
    <name type="scientific">Arabidopsis thaliana</name>
    <name type="common">Mouse-ear cress</name>
    <dbReference type="NCBI Taxonomy" id="3702"/>
    <lineage>
        <taxon>Eukaryota</taxon>
        <taxon>Viridiplantae</taxon>
        <taxon>Streptophyta</taxon>
        <taxon>Embryophyta</taxon>
        <taxon>Tracheophyta</taxon>
        <taxon>Spermatophyta</taxon>
        <taxon>Magnoliopsida</taxon>
        <taxon>eudicotyledons</taxon>
        <taxon>Gunneridae</taxon>
        <taxon>Pentapetalae</taxon>
        <taxon>rosids</taxon>
        <taxon>malvids</taxon>
        <taxon>Brassicales</taxon>
        <taxon>Brassicaceae</taxon>
        <taxon>Camelineae</taxon>
        <taxon>Arabidopsis</taxon>
    </lineage>
</organism>
<feature type="chain" id="PRO_0000350857" description="Scarecrow-like protein 15">
    <location>
        <begin position="1"/>
        <end position="486"/>
    </location>
</feature>
<feature type="domain" description="GRAS" evidence="2">
    <location>
        <begin position="113"/>
        <end position="485"/>
    </location>
</feature>
<feature type="region of interest" description="Disordered" evidence="3">
    <location>
        <begin position="1"/>
        <end position="28"/>
    </location>
</feature>
<feature type="region of interest" description="Leucine repeat I (LRI)" evidence="2">
    <location>
        <begin position="120"/>
        <end position="179"/>
    </location>
</feature>
<feature type="region of interest" description="VHIID" evidence="2">
    <location>
        <begin position="198"/>
        <end position="266"/>
    </location>
</feature>
<feature type="region of interest" description="Leucine repeat II (LRII)" evidence="2">
    <location>
        <begin position="278"/>
        <end position="310"/>
    </location>
</feature>
<feature type="region of interest" description="PFYRE" evidence="2">
    <location>
        <begin position="320"/>
        <end position="410"/>
    </location>
</feature>
<feature type="region of interest" description="SAW" evidence="2">
    <location>
        <begin position="413"/>
        <end position="485"/>
    </location>
</feature>
<feature type="short sequence motif" description="VHIID" evidence="2">
    <location>
        <begin position="232"/>
        <end position="236"/>
    </location>
</feature>
<feature type="compositionally biased region" description="Low complexity" evidence="3">
    <location>
        <begin position="10"/>
        <end position="24"/>
    </location>
</feature>
<feature type="sequence conflict" description="In Ref. 2; CAB16826/CAB80337." evidence="5" ref="2">
    <original>L</original>
    <variation>Q</variation>
    <location>
        <position position="440"/>
    </location>
</feature>
<keyword id="KW-0539">Nucleus</keyword>
<keyword id="KW-1185">Reference proteome</keyword>
<keyword id="KW-0804">Transcription</keyword>
<keyword id="KW-0805">Transcription regulation</keyword>
<evidence type="ECO:0000250" key="1"/>
<evidence type="ECO:0000255" key="2">
    <source>
        <dbReference type="PROSITE-ProRule" id="PRU01191"/>
    </source>
</evidence>
<evidence type="ECO:0000256" key="3">
    <source>
        <dbReference type="SAM" id="MobiDB-lite"/>
    </source>
</evidence>
<evidence type="ECO:0000269" key="4">
    <source>
    </source>
</evidence>
<evidence type="ECO:0000305" key="5"/>
<protein>
    <recommendedName>
        <fullName>Scarecrow-like protein 15</fullName>
        <shortName>AtSCL15</shortName>
    </recommendedName>
    <alternativeName>
        <fullName>GRAS family protein 25</fullName>
        <shortName>AtGRAS-25</shortName>
    </alternativeName>
</protein>
<sequence>MKIPASSPQDTTNNNNNTNSTDSNHLSMDEHVMRSMDWDSIMKELELDDDSAPNSLKTGFTTTTTDSTILPLYAVDSNLPGFPDQIQPSDFESSSDVYPGQNQTTGYGFNSLDSVDNGGFDFIEDLIRVVDCVESDELQLAQVVLSRLNQRLRSPAGRPLQRAAFYFKEALGSFLTGSNRNPIRLSSWSEIVQRIRAIKEYSGISPIPLFSHFTANQAILDSLSSQSSSPFVHVVDFEIGFGGQYASLMREITEKSVSGGFLRVTAVVAEECAVETRLVKENLTQFAAEMKIRFQIEFVLMKTFEMLSFKAIRFVEGERTVVLISPAIFRRLSGITDFVNNLRRVSPKVVVFVDSEGWTEIAGSGSFRREFVSALEFYTMVLESLDAAAPPGDLVKKIVEAFVLRPKISAAVETAADRRHTGEMTWREAFCAAGMRPIQLSQFADFQAECLLEKAQVRGFHVAKRQGELVLCWHGRALVATSAWRF</sequence>
<comment type="function">
    <text evidence="1">Probable transcription factor involved in plant development.</text>
</comment>
<comment type="interaction">
    <interactant intactId="EBI-15193077">
        <id>O23210</id>
    </interactant>
    <interactant intactId="EBI-15193079">
        <id>F4JY84</id>
        <label>TCX7</label>
    </interactant>
    <organismsDiffer>false</organismsDiffer>
    <experiments>3</experiments>
</comment>
<comment type="subcellular location">
    <subcellularLocation>
        <location evidence="4">Nucleus</location>
    </subcellularLocation>
</comment>
<comment type="tissue specificity">
    <text evidence="4">Expressed in seedlings, roots, leaves and flowers.</text>
</comment>
<comment type="similarity">
    <text evidence="5">Belongs to the GRAS family.</text>
</comment>